<organism>
    <name type="scientific">Danio rerio</name>
    <name type="common">Zebrafish</name>
    <name type="synonym">Brachydanio rerio</name>
    <dbReference type="NCBI Taxonomy" id="7955"/>
    <lineage>
        <taxon>Eukaryota</taxon>
        <taxon>Metazoa</taxon>
        <taxon>Chordata</taxon>
        <taxon>Craniata</taxon>
        <taxon>Vertebrata</taxon>
        <taxon>Euteleostomi</taxon>
        <taxon>Actinopterygii</taxon>
        <taxon>Neopterygii</taxon>
        <taxon>Teleostei</taxon>
        <taxon>Ostariophysi</taxon>
        <taxon>Cypriniformes</taxon>
        <taxon>Danionidae</taxon>
        <taxon>Danioninae</taxon>
        <taxon>Danio</taxon>
    </lineage>
</organism>
<gene>
    <name type="primary">nccrp1</name>
    <name type="ORF">si:dkey-85K8.6</name>
    <name type="ORF">wu:fa93e02</name>
    <name type="ORF">wu:fb12f07</name>
    <name type="ORF">zgc:122987</name>
</gene>
<feature type="chain" id="PRO_0000421451" description="F-box only protein 50">
    <location>
        <begin position="1"/>
        <end position="237"/>
    </location>
</feature>
<feature type="domain" description="FBA" evidence="2">
    <location>
        <begin position="31"/>
        <end position="231"/>
    </location>
</feature>
<feature type="region of interest" description="Disordered" evidence="3">
    <location>
        <begin position="40"/>
        <end position="82"/>
    </location>
</feature>
<feature type="compositionally biased region" description="Pro residues" evidence="3">
    <location>
        <begin position="64"/>
        <end position="74"/>
    </location>
</feature>
<feature type="sequence conflict" description="In Ref. 3; AAI29279." evidence="5" ref="3">
    <original>G</original>
    <variation>S</variation>
    <location>
        <position position="100"/>
    </location>
</feature>
<feature type="sequence conflict" description="In Ref. 3; AAI07633." evidence="5" ref="3">
    <original>T</original>
    <variation>S</variation>
    <location>
        <position position="113"/>
    </location>
</feature>
<feature type="sequence conflict" description="In Ref. 1; AAF19642." evidence="5" ref="1">
    <original>T</original>
    <variation>N</variation>
    <location>
        <position position="185"/>
    </location>
</feature>
<feature type="sequence conflict" description="In Ref. 1; AAF19642 and 3; AAI07633/AAI29279." evidence="5" ref="1 3">
    <original>A</original>
    <variation>G</variation>
    <location>
        <position position="197"/>
    </location>
</feature>
<feature type="sequence conflict" description="In Ref. 1; AAF19642." evidence="5" ref="1">
    <original>A</original>
    <variation>T</variation>
    <location>
        <position position="231"/>
    </location>
</feature>
<proteinExistence type="evidence at transcript level"/>
<sequence>MATDWKQKCDSEWQLGAHGVPMPDTVDWKSVFETKPFERNLLQNPSPYGVNHTVPPPEPHRSGIPPPSDRPPQLEPEGNFSGWKTNTEVLPYDTSGIPPGVVICQLPQHRWFTLEQCVDLKAAGLWDQLLDDFQPEIVIEDWYEESQLHKCIYQLDVKLLGADGETVIKQHTYNPEEDLECYSHTWKKVSHVFSKYAPGVRYIHFLHRLKNQFMVEFFNTKVTDSSVIVKASKPSVK</sequence>
<keyword id="KW-0963">Cytoplasm</keyword>
<keyword id="KW-1185">Reference proteome</keyword>
<comment type="function">
    <text evidence="1">May promote cell proliferation.</text>
</comment>
<comment type="subcellular location">
    <subcellularLocation>
        <location evidence="1">Cytoplasm</location>
    </subcellularLocation>
</comment>
<comment type="tissue specificity">
    <text evidence="4">Expressed in nonspecific cytotoxic cells (NCC).</text>
</comment>
<dbReference type="EMBL" id="AF207707">
    <property type="protein sequence ID" value="AAF19642.1"/>
    <property type="molecule type" value="mRNA"/>
</dbReference>
<dbReference type="EMBL" id="BX547938">
    <property type="protein sequence ID" value="CAM16435.1"/>
    <property type="molecule type" value="Genomic_DNA"/>
</dbReference>
<dbReference type="EMBL" id="BC092704">
    <property type="protein sequence ID" value="AAH92704.2"/>
    <property type="molecule type" value="mRNA"/>
</dbReference>
<dbReference type="EMBL" id="BC107632">
    <property type="protein sequence ID" value="AAI07633.1"/>
    <property type="molecule type" value="mRNA"/>
</dbReference>
<dbReference type="EMBL" id="BC129278">
    <property type="protein sequence ID" value="AAI29279.1"/>
    <property type="molecule type" value="mRNA"/>
</dbReference>
<dbReference type="RefSeq" id="NP_570996.2">
    <property type="nucleotide sequence ID" value="NM_130921.2"/>
</dbReference>
<dbReference type="SMR" id="Q568V3"/>
<dbReference type="FunCoup" id="Q568V3">
    <property type="interactions" value="1306"/>
</dbReference>
<dbReference type="STRING" id="7955.ENSDARP00000051185"/>
<dbReference type="PaxDb" id="7955-ENSDARP00000051185"/>
<dbReference type="DNASU" id="30078"/>
<dbReference type="Ensembl" id="ENSDART00000051186">
    <property type="protein sequence ID" value="ENSDARP00000051185"/>
    <property type="gene ID" value="ENSDARG00000035326"/>
</dbReference>
<dbReference type="Ensembl" id="ENSDART00000186667">
    <property type="protein sequence ID" value="ENSDARP00000147799"/>
    <property type="gene ID" value="ENSDARG00000113175"/>
</dbReference>
<dbReference type="GeneID" id="30078"/>
<dbReference type="KEGG" id="dre:30078"/>
<dbReference type="AGR" id="ZFIN:ZDB-GENE-000210-13"/>
<dbReference type="CTD" id="342897"/>
<dbReference type="ZFIN" id="ZDB-GENE-000210-13">
    <property type="gene designation" value="nccrp1"/>
</dbReference>
<dbReference type="eggNOG" id="KOG3248">
    <property type="taxonomic scope" value="Eukaryota"/>
</dbReference>
<dbReference type="HOGENOM" id="CLU_068548_0_0_1"/>
<dbReference type="InParanoid" id="Q568V3"/>
<dbReference type="OMA" id="DGDFSGW"/>
<dbReference type="OrthoDB" id="1107553at2759"/>
<dbReference type="PhylomeDB" id="Q568V3"/>
<dbReference type="TreeFam" id="TF320527"/>
<dbReference type="PRO" id="PR:Q568V3"/>
<dbReference type="Proteomes" id="UP000000437">
    <property type="component" value="Alternate scaffold 5"/>
</dbReference>
<dbReference type="Proteomes" id="UP000000437">
    <property type="component" value="Chromosome 5"/>
</dbReference>
<dbReference type="Bgee" id="ENSDARG00000035326">
    <property type="expression patterns" value="Expressed in granulocyte and 24 other cell types or tissues"/>
</dbReference>
<dbReference type="GO" id="GO:0005737">
    <property type="term" value="C:cytoplasm"/>
    <property type="evidence" value="ECO:0000318"/>
    <property type="project" value="GO_Central"/>
</dbReference>
<dbReference type="GO" id="GO:0019005">
    <property type="term" value="C:SCF ubiquitin ligase complex"/>
    <property type="evidence" value="ECO:0000318"/>
    <property type="project" value="GO_Central"/>
</dbReference>
<dbReference type="GO" id="GO:0036503">
    <property type="term" value="P:ERAD pathway"/>
    <property type="evidence" value="ECO:0000318"/>
    <property type="project" value="GO_Central"/>
</dbReference>
<dbReference type="GO" id="GO:0006516">
    <property type="term" value="P:glycoprotein catabolic process"/>
    <property type="evidence" value="ECO:0000318"/>
    <property type="project" value="GO_Central"/>
</dbReference>
<dbReference type="GO" id="GO:0031146">
    <property type="term" value="P:SCF-dependent proteasomal ubiquitin-dependent protein catabolic process"/>
    <property type="evidence" value="ECO:0000318"/>
    <property type="project" value="GO_Central"/>
</dbReference>
<dbReference type="FunFam" id="2.60.120.260:FF:000086">
    <property type="entry name" value="Non-specific cytotoxic cell receptor protein 1"/>
    <property type="match status" value="1"/>
</dbReference>
<dbReference type="Gene3D" id="2.60.120.260">
    <property type="entry name" value="Galactose-binding domain-like"/>
    <property type="match status" value="1"/>
</dbReference>
<dbReference type="InterPro" id="IPR007397">
    <property type="entry name" value="F-box-assoc_dom"/>
</dbReference>
<dbReference type="InterPro" id="IPR039752">
    <property type="entry name" value="F-box_only"/>
</dbReference>
<dbReference type="InterPro" id="IPR008979">
    <property type="entry name" value="Galactose-bd-like_sf"/>
</dbReference>
<dbReference type="PANTHER" id="PTHR12125:SF1">
    <property type="entry name" value="F-BOX ONLY PROTEIN 50"/>
    <property type="match status" value="1"/>
</dbReference>
<dbReference type="PANTHER" id="PTHR12125">
    <property type="entry name" value="F-BOX ONLY PROTEIN 6-LIKE PROTEIN"/>
    <property type="match status" value="1"/>
</dbReference>
<dbReference type="Pfam" id="PF04300">
    <property type="entry name" value="FBA"/>
    <property type="match status" value="1"/>
</dbReference>
<dbReference type="SMART" id="SM01198">
    <property type="entry name" value="FBA"/>
    <property type="match status" value="1"/>
</dbReference>
<dbReference type="SUPFAM" id="SSF49785">
    <property type="entry name" value="Galactose-binding domain-like"/>
    <property type="match status" value="1"/>
</dbReference>
<dbReference type="PROSITE" id="PS51114">
    <property type="entry name" value="FBA"/>
    <property type="match status" value="1"/>
</dbReference>
<reference key="1">
    <citation type="journal article" date="2002" name="J. Mol. Evol.">
        <title>The antigen receptor (NCCRP-1) on catfish and zebrafish nonspecific cytotoxic cells belongs to a new gene family characterized by an F-box-associated domain.</title>
        <authorList>
            <person name="Jaso-Friedmann L."/>
            <person name="Peterson D.S."/>
            <person name="Gonzalez D.S."/>
            <person name="Evans D.L."/>
        </authorList>
    </citation>
    <scope>NUCLEOTIDE SEQUENCE [MRNA]</scope>
</reference>
<reference key="2">
    <citation type="journal article" date="2013" name="Nature">
        <title>The zebrafish reference genome sequence and its relationship to the human genome.</title>
        <authorList>
            <person name="Howe K."/>
            <person name="Clark M.D."/>
            <person name="Torroja C.F."/>
            <person name="Torrance J."/>
            <person name="Berthelot C."/>
            <person name="Muffato M."/>
            <person name="Collins J.E."/>
            <person name="Humphray S."/>
            <person name="McLaren K."/>
            <person name="Matthews L."/>
            <person name="McLaren S."/>
            <person name="Sealy I."/>
            <person name="Caccamo M."/>
            <person name="Churcher C."/>
            <person name="Scott C."/>
            <person name="Barrett J.C."/>
            <person name="Koch R."/>
            <person name="Rauch G.J."/>
            <person name="White S."/>
            <person name="Chow W."/>
            <person name="Kilian B."/>
            <person name="Quintais L.T."/>
            <person name="Guerra-Assuncao J.A."/>
            <person name="Zhou Y."/>
            <person name="Gu Y."/>
            <person name="Yen J."/>
            <person name="Vogel J.H."/>
            <person name="Eyre T."/>
            <person name="Redmond S."/>
            <person name="Banerjee R."/>
            <person name="Chi J."/>
            <person name="Fu B."/>
            <person name="Langley E."/>
            <person name="Maguire S.F."/>
            <person name="Laird G.K."/>
            <person name="Lloyd D."/>
            <person name="Kenyon E."/>
            <person name="Donaldson S."/>
            <person name="Sehra H."/>
            <person name="Almeida-King J."/>
            <person name="Loveland J."/>
            <person name="Trevanion S."/>
            <person name="Jones M."/>
            <person name="Quail M."/>
            <person name="Willey D."/>
            <person name="Hunt A."/>
            <person name="Burton J."/>
            <person name="Sims S."/>
            <person name="McLay K."/>
            <person name="Plumb B."/>
            <person name="Davis J."/>
            <person name="Clee C."/>
            <person name="Oliver K."/>
            <person name="Clark R."/>
            <person name="Riddle C."/>
            <person name="Elliot D."/>
            <person name="Threadgold G."/>
            <person name="Harden G."/>
            <person name="Ware D."/>
            <person name="Begum S."/>
            <person name="Mortimore B."/>
            <person name="Kerry G."/>
            <person name="Heath P."/>
            <person name="Phillimore B."/>
            <person name="Tracey A."/>
            <person name="Corby N."/>
            <person name="Dunn M."/>
            <person name="Johnson C."/>
            <person name="Wood J."/>
            <person name="Clark S."/>
            <person name="Pelan S."/>
            <person name="Griffiths G."/>
            <person name="Smith M."/>
            <person name="Glithero R."/>
            <person name="Howden P."/>
            <person name="Barker N."/>
            <person name="Lloyd C."/>
            <person name="Stevens C."/>
            <person name="Harley J."/>
            <person name="Holt K."/>
            <person name="Panagiotidis G."/>
            <person name="Lovell J."/>
            <person name="Beasley H."/>
            <person name="Henderson C."/>
            <person name="Gordon D."/>
            <person name="Auger K."/>
            <person name="Wright D."/>
            <person name="Collins J."/>
            <person name="Raisen C."/>
            <person name="Dyer L."/>
            <person name="Leung K."/>
            <person name="Robertson L."/>
            <person name="Ambridge K."/>
            <person name="Leongamornlert D."/>
            <person name="McGuire S."/>
            <person name="Gilderthorp R."/>
            <person name="Griffiths C."/>
            <person name="Manthravadi D."/>
            <person name="Nichol S."/>
            <person name="Barker G."/>
            <person name="Whitehead S."/>
            <person name="Kay M."/>
            <person name="Brown J."/>
            <person name="Murnane C."/>
            <person name="Gray E."/>
            <person name="Humphries M."/>
            <person name="Sycamore N."/>
            <person name="Barker D."/>
            <person name="Saunders D."/>
            <person name="Wallis J."/>
            <person name="Babbage A."/>
            <person name="Hammond S."/>
            <person name="Mashreghi-Mohammadi M."/>
            <person name="Barr L."/>
            <person name="Martin S."/>
            <person name="Wray P."/>
            <person name="Ellington A."/>
            <person name="Matthews N."/>
            <person name="Ellwood M."/>
            <person name="Woodmansey R."/>
            <person name="Clark G."/>
            <person name="Cooper J."/>
            <person name="Tromans A."/>
            <person name="Grafham D."/>
            <person name="Skuce C."/>
            <person name="Pandian R."/>
            <person name="Andrews R."/>
            <person name="Harrison E."/>
            <person name="Kimberley A."/>
            <person name="Garnett J."/>
            <person name="Fosker N."/>
            <person name="Hall R."/>
            <person name="Garner P."/>
            <person name="Kelly D."/>
            <person name="Bird C."/>
            <person name="Palmer S."/>
            <person name="Gehring I."/>
            <person name="Berger A."/>
            <person name="Dooley C.M."/>
            <person name="Ersan-Urun Z."/>
            <person name="Eser C."/>
            <person name="Geiger H."/>
            <person name="Geisler M."/>
            <person name="Karotki L."/>
            <person name="Kirn A."/>
            <person name="Konantz J."/>
            <person name="Konantz M."/>
            <person name="Oberlander M."/>
            <person name="Rudolph-Geiger S."/>
            <person name="Teucke M."/>
            <person name="Lanz C."/>
            <person name="Raddatz G."/>
            <person name="Osoegawa K."/>
            <person name="Zhu B."/>
            <person name="Rapp A."/>
            <person name="Widaa S."/>
            <person name="Langford C."/>
            <person name="Yang F."/>
            <person name="Schuster S.C."/>
            <person name="Carter N.P."/>
            <person name="Harrow J."/>
            <person name="Ning Z."/>
            <person name="Herrero J."/>
            <person name="Searle S.M."/>
            <person name="Enright A."/>
            <person name="Geisler R."/>
            <person name="Plasterk R.H."/>
            <person name="Lee C."/>
            <person name="Westerfield M."/>
            <person name="de Jong P.J."/>
            <person name="Zon L.I."/>
            <person name="Postlethwait J.H."/>
            <person name="Nusslein-Volhard C."/>
            <person name="Hubbard T.J."/>
            <person name="Roest Crollius H."/>
            <person name="Rogers J."/>
            <person name="Stemple D.L."/>
        </authorList>
    </citation>
    <scope>NUCLEOTIDE SEQUENCE [LARGE SCALE GENOMIC DNA]</scope>
    <source>
        <strain>Tuebingen</strain>
    </source>
</reference>
<reference key="3">
    <citation type="submission" date="2005-04" db="EMBL/GenBank/DDBJ databases">
        <authorList>
            <consortium name="NIH - Zebrafish Gene Collection (ZGC) project"/>
        </authorList>
    </citation>
    <scope>NUCLEOTIDE SEQUENCE [LARGE SCALE MRNA]</scope>
    <source>
        <tissue>Gill</tissue>
        <tissue>Olfactory epithelium</tissue>
        <tissue>Ovary</tissue>
    </source>
</reference>
<reference key="4">
    <citation type="journal article" date="2009" name="Dev. Comp. Immunol.">
        <title>Identification of phagocytic cells, NK-like cytotoxic cell activity and the production of cellular exudates in the coelomic cavity of adult zebrafish.</title>
        <authorList>
            <person name="Moss L.D."/>
            <person name="Monette M.M."/>
            <person name="Jaso-Friedmann L."/>
            <person name="Leary J.H. III"/>
            <person name="Dougan S.T."/>
            <person name="Krunkosky T."/>
            <person name="Evans D.L."/>
        </authorList>
    </citation>
    <scope>TISSUE SPECIFICITY</scope>
</reference>
<evidence type="ECO:0000250" key="1"/>
<evidence type="ECO:0000255" key="2">
    <source>
        <dbReference type="PROSITE-ProRule" id="PRU00482"/>
    </source>
</evidence>
<evidence type="ECO:0000256" key="3">
    <source>
        <dbReference type="SAM" id="MobiDB-lite"/>
    </source>
</evidence>
<evidence type="ECO:0000269" key="4">
    <source>
    </source>
</evidence>
<evidence type="ECO:0000305" key="5"/>
<protein>
    <recommendedName>
        <fullName>F-box only protein 50</fullName>
    </recommendedName>
    <alternativeName>
        <fullName>NCC receptor protein 1</fullName>
        <shortName>NCCRP-1</shortName>
    </alternativeName>
    <alternativeName>
        <fullName>Non-specific cytotoxic cell receptor protein 1</fullName>
    </alternativeName>
</protein>
<name>FBX50_DANRE</name>
<accession>Q568V3</accession>
<accession>A1L1Z5</accession>
<accession>A2BHA4</accession>
<accession>Q3B7F3</accession>
<accession>Q9PTD8</accession>